<organism>
    <name type="scientific">Oleidesulfovibrio alaskensis (strain ATCC BAA-1058 / DSM 17464 / G20)</name>
    <name type="common">Desulfovibrio alaskensis</name>
    <dbReference type="NCBI Taxonomy" id="207559"/>
    <lineage>
        <taxon>Bacteria</taxon>
        <taxon>Pseudomonadati</taxon>
        <taxon>Thermodesulfobacteriota</taxon>
        <taxon>Desulfovibrionia</taxon>
        <taxon>Desulfovibrionales</taxon>
        <taxon>Desulfovibrionaceae</taxon>
        <taxon>Oleidesulfovibrio</taxon>
    </lineage>
</organism>
<protein>
    <recommendedName>
        <fullName evidence="1">Tetraacyldisaccharide 4'-kinase</fullName>
        <ecNumber evidence="1">2.7.1.130</ecNumber>
    </recommendedName>
    <alternativeName>
        <fullName evidence="1">Lipid A 4'-kinase</fullName>
    </alternativeName>
</protein>
<evidence type="ECO:0000255" key="1">
    <source>
        <dbReference type="HAMAP-Rule" id="MF_00409"/>
    </source>
</evidence>
<feature type="chain" id="PRO_0000340830" description="Tetraacyldisaccharide 4'-kinase">
    <location>
        <begin position="1"/>
        <end position="356"/>
    </location>
</feature>
<feature type="binding site" evidence="1">
    <location>
        <begin position="51"/>
        <end position="58"/>
    </location>
    <ligand>
        <name>ATP</name>
        <dbReference type="ChEBI" id="CHEBI:30616"/>
    </ligand>
</feature>
<reference key="1">
    <citation type="journal article" date="2011" name="J. Bacteriol.">
        <title>Complete genome sequence and updated annotation of Desulfovibrio alaskensis G20.</title>
        <authorList>
            <person name="Hauser L.J."/>
            <person name="Land M.L."/>
            <person name="Brown S.D."/>
            <person name="Larimer F."/>
            <person name="Keller K.L."/>
            <person name="Rapp-Giles B.J."/>
            <person name="Price M.N."/>
            <person name="Lin M."/>
            <person name="Bruce D.C."/>
            <person name="Detter J.C."/>
            <person name="Tapia R."/>
            <person name="Han C.S."/>
            <person name="Goodwin L.A."/>
            <person name="Cheng J.F."/>
            <person name="Pitluck S."/>
            <person name="Copeland A."/>
            <person name="Lucas S."/>
            <person name="Nolan M."/>
            <person name="Lapidus A.L."/>
            <person name="Palumbo A.V."/>
            <person name="Wall J.D."/>
        </authorList>
    </citation>
    <scope>NUCLEOTIDE SEQUENCE [LARGE SCALE GENOMIC DNA]</scope>
    <source>
        <strain>ATCC BAA-1058 / DSM 17464 / G20</strain>
    </source>
</reference>
<name>LPXK_OLEA2</name>
<comment type="function">
    <text evidence="1">Transfers the gamma-phosphate of ATP to the 4'-position of a tetraacyldisaccharide 1-phosphate intermediate (termed DS-1-P) to form tetraacyldisaccharide 1,4'-bis-phosphate (lipid IVA).</text>
</comment>
<comment type="catalytic activity">
    <reaction evidence="1">
        <text>a lipid A disaccharide + ATP = a lipid IVA + ADP + H(+)</text>
        <dbReference type="Rhea" id="RHEA:67840"/>
        <dbReference type="ChEBI" id="CHEBI:15378"/>
        <dbReference type="ChEBI" id="CHEBI:30616"/>
        <dbReference type="ChEBI" id="CHEBI:176343"/>
        <dbReference type="ChEBI" id="CHEBI:176425"/>
        <dbReference type="ChEBI" id="CHEBI:456216"/>
        <dbReference type="EC" id="2.7.1.130"/>
    </reaction>
</comment>
<comment type="pathway">
    <text evidence="1">Glycolipid biosynthesis; lipid IV(A) biosynthesis; lipid IV(A) from (3R)-3-hydroxytetradecanoyl-[acyl-carrier-protein] and UDP-N-acetyl-alpha-D-glucosamine: step 6/6.</text>
</comment>
<comment type="similarity">
    <text evidence="1">Belongs to the LpxK family.</text>
</comment>
<proteinExistence type="inferred from homology"/>
<accession>Q30Y50</accession>
<dbReference type="EC" id="2.7.1.130" evidence="1"/>
<dbReference type="EMBL" id="CP000112">
    <property type="protein sequence ID" value="ABB39396.1"/>
    <property type="molecule type" value="Genomic_DNA"/>
</dbReference>
<dbReference type="RefSeq" id="WP_011368436.1">
    <property type="nucleotide sequence ID" value="NC_007519.1"/>
</dbReference>
<dbReference type="SMR" id="Q30Y50"/>
<dbReference type="STRING" id="207559.Dde_2600"/>
<dbReference type="DNASU" id="3757622"/>
<dbReference type="KEGG" id="dde:Dde_2600"/>
<dbReference type="eggNOG" id="COG1663">
    <property type="taxonomic scope" value="Bacteria"/>
</dbReference>
<dbReference type="HOGENOM" id="CLU_038816_6_1_7"/>
<dbReference type="UniPathway" id="UPA00359">
    <property type="reaction ID" value="UER00482"/>
</dbReference>
<dbReference type="Proteomes" id="UP000002710">
    <property type="component" value="Chromosome"/>
</dbReference>
<dbReference type="GO" id="GO:0005886">
    <property type="term" value="C:plasma membrane"/>
    <property type="evidence" value="ECO:0007669"/>
    <property type="project" value="TreeGrafter"/>
</dbReference>
<dbReference type="GO" id="GO:0005524">
    <property type="term" value="F:ATP binding"/>
    <property type="evidence" value="ECO:0007669"/>
    <property type="project" value="UniProtKB-UniRule"/>
</dbReference>
<dbReference type="GO" id="GO:0009029">
    <property type="term" value="F:tetraacyldisaccharide 4'-kinase activity"/>
    <property type="evidence" value="ECO:0007669"/>
    <property type="project" value="UniProtKB-UniRule"/>
</dbReference>
<dbReference type="GO" id="GO:0009245">
    <property type="term" value="P:lipid A biosynthetic process"/>
    <property type="evidence" value="ECO:0007669"/>
    <property type="project" value="UniProtKB-UniRule"/>
</dbReference>
<dbReference type="GO" id="GO:0009244">
    <property type="term" value="P:lipopolysaccharide core region biosynthetic process"/>
    <property type="evidence" value="ECO:0007669"/>
    <property type="project" value="TreeGrafter"/>
</dbReference>
<dbReference type="HAMAP" id="MF_00409">
    <property type="entry name" value="LpxK"/>
    <property type="match status" value="1"/>
</dbReference>
<dbReference type="InterPro" id="IPR003758">
    <property type="entry name" value="LpxK"/>
</dbReference>
<dbReference type="InterPro" id="IPR027417">
    <property type="entry name" value="P-loop_NTPase"/>
</dbReference>
<dbReference type="NCBIfam" id="TIGR00682">
    <property type="entry name" value="lpxK"/>
    <property type="match status" value="1"/>
</dbReference>
<dbReference type="PANTHER" id="PTHR42724">
    <property type="entry name" value="TETRAACYLDISACCHARIDE 4'-KINASE"/>
    <property type="match status" value="1"/>
</dbReference>
<dbReference type="PANTHER" id="PTHR42724:SF1">
    <property type="entry name" value="TETRAACYLDISACCHARIDE 4'-KINASE, MITOCHONDRIAL-RELATED"/>
    <property type="match status" value="1"/>
</dbReference>
<dbReference type="Pfam" id="PF02606">
    <property type="entry name" value="LpxK"/>
    <property type="match status" value="1"/>
</dbReference>
<dbReference type="SUPFAM" id="SSF52540">
    <property type="entry name" value="P-loop containing nucleoside triphosphate hydrolases"/>
    <property type="match status" value="1"/>
</dbReference>
<sequence>MSSLPLQKSLYPLLRPLGAAYRVLMRARRRRYENGAACGTDVPCVSVGNIGWGGSGKTPVVQWLLQWAAVHGLHAVVLTRGYKASPPGLPYVVTPQSSAAHAGDEPLMLARSCPQATVVVDPVRSRSARWAQERLAPDFFVLDDGFQHVQVARDTDLVLLKKDDLHAEWGRVLPAGSWREGPEALSRAAAFCIKCGSGEFSGLVPDFENRLGSFGVPVFGFSLRPGALIPVCGAHEGAQLPAGAPYVLFSGVGDPAQVAVTVSSFLGYDPVRHHVFADHHGYTQADMDRMAGYGLPLVCTPKDAVKLTAPCGVPVWTLSLETNFHSVWNAQPPAGQAGEGFAQWWQCRWQRLAGLR</sequence>
<keyword id="KW-0067">ATP-binding</keyword>
<keyword id="KW-0418">Kinase</keyword>
<keyword id="KW-0441">Lipid A biosynthesis</keyword>
<keyword id="KW-0444">Lipid biosynthesis</keyword>
<keyword id="KW-0443">Lipid metabolism</keyword>
<keyword id="KW-0547">Nucleotide-binding</keyword>
<keyword id="KW-1185">Reference proteome</keyword>
<keyword id="KW-0808">Transferase</keyword>
<gene>
    <name evidence="1" type="primary">lpxK</name>
    <name type="ordered locus">Dde_2600</name>
</gene>